<keyword id="KW-0030">Aminoacyl-tRNA synthetase</keyword>
<keyword id="KW-0067">ATP-binding</keyword>
<keyword id="KW-0436">Ligase</keyword>
<keyword id="KW-0479">Metal-binding</keyword>
<keyword id="KW-0547">Nucleotide-binding</keyword>
<keyword id="KW-0862">Zinc</keyword>
<evidence type="ECO:0000255" key="1">
    <source>
        <dbReference type="HAMAP-Rule" id="MF_01428"/>
    </source>
</evidence>
<accession>A4XYB8</accession>
<reference key="1">
    <citation type="submission" date="2007-04" db="EMBL/GenBank/DDBJ databases">
        <title>Complete sequence of Pseudomonas mendocina ymp.</title>
        <authorList>
            <consortium name="US DOE Joint Genome Institute"/>
            <person name="Copeland A."/>
            <person name="Lucas S."/>
            <person name="Lapidus A."/>
            <person name="Barry K."/>
            <person name="Glavina del Rio T."/>
            <person name="Dalin E."/>
            <person name="Tice H."/>
            <person name="Pitluck S."/>
            <person name="Kiss H."/>
            <person name="Brettin T."/>
            <person name="Detter J.C."/>
            <person name="Bruce D."/>
            <person name="Han C."/>
            <person name="Schmutz J."/>
            <person name="Larimer F."/>
            <person name="Land M."/>
            <person name="Hauser L."/>
            <person name="Kyrpides N."/>
            <person name="Mikhailova N."/>
            <person name="Hersman L."/>
            <person name="Dubois J."/>
            <person name="Maurice P."/>
            <person name="Richardson P."/>
        </authorList>
    </citation>
    <scope>NUCLEOTIDE SEQUENCE [LARGE SCALE GENOMIC DNA]</scope>
    <source>
        <strain>ymp</strain>
    </source>
</reference>
<comment type="function">
    <text evidence="1">Catalyzes the tRNA-independent activation of glutamate in presence of ATP and the subsequent transfer of glutamate onto a tRNA(Asp). Glutamate is transferred on the 2-amino-5-(4,5-dihydroxy-2-cyclopenten-1-yl) moiety of the queuosine in the wobble position of the QUC anticodon.</text>
</comment>
<comment type="cofactor">
    <cofactor evidence="1">
        <name>Zn(2+)</name>
        <dbReference type="ChEBI" id="CHEBI:29105"/>
    </cofactor>
    <text evidence="1">Binds 1 zinc ion per subunit.</text>
</comment>
<comment type="similarity">
    <text evidence="1">Belongs to the class-I aminoacyl-tRNA synthetase family. GluQ subfamily.</text>
</comment>
<sequence length="294" mass="32888">MNTAYIGRFAPTPSGYLHFGSLVAALASYLDARAVGGRWLLRMEDLDPPREIPGAQDAILRTLETYGFEWDGELVRQSERHAEYAAVIARLLSQGLAYACTCSRKQLEGYAGIYPGFCRNACHPDHDAAIRLRVPELDYHFIDRVQGEFRQHLGREVGDFVIRRRDGLFAYQLAVVLDDAWQGVTDVVRGADLLDSTPRQLYLQELLGLPQPRYLHVPLIIQPDGHKLGKSYRSPPLPADQAGPLLLRALRALGQQPPTELQGAAPAELLSWGRANWDAMRIPRSRTLAEAQLR</sequence>
<name>GLUQ_ECTM1</name>
<feature type="chain" id="PRO_1000024363" description="Glutamyl-Q tRNA(Asp) synthetase">
    <location>
        <begin position="1"/>
        <end position="294"/>
    </location>
</feature>
<feature type="short sequence motif" description="'HIGH' region">
    <location>
        <begin position="11"/>
        <end position="21"/>
    </location>
</feature>
<feature type="short sequence motif" description="'KMSKS' region">
    <location>
        <begin position="227"/>
        <end position="231"/>
    </location>
</feature>
<feature type="binding site" evidence="1">
    <location>
        <begin position="8"/>
        <end position="12"/>
    </location>
    <ligand>
        <name>L-glutamate</name>
        <dbReference type="ChEBI" id="CHEBI:29985"/>
    </ligand>
</feature>
<feature type="binding site" evidence="1">
    <location>
        <position position="44"/>
    </location>
    <ligand>
        <name>L-glutamate</name>
        <dbReference type="ChEBI" id="CHEBI:29985"/>
    </ligand>
</feature>
<feature type="binding site" evidence="1">
    <location>
        <position position="100"/>
    </location>
    <ligand>
        <name>Zn(2+)</name>
        <dbReference type="ChEBI" id="CHEBI:29105"/>
    </ligand>
</feature>
<feature type="binding site" evidence="1">
    <location>
        <position position="102"/>
    </location>
    <ligand>
        <name>Zn(2+)</name>
        <dbReference type="ChEBI" id="CHEBI:29105"/>
    </ligand>
</feature>
<feature type="binding site" evidence="1">
    <location>
        <position position="114"/>
    </location>
    <ligand>
        <name>Zn(2+)</name>
        <dbReference type="ChEBI" id="CHEBI:29105"/>
    </ligand>
</feature>
<feature type="binding site" evidence="1">
    <location>
        <position position="118"/>
    </location>
    <ligand>
        <name>Zn(2+)</name>
        <dbReference type="ChEBI" id="CHEBI:29105"/>
    </ligand>
</feature>
<feature type="binding site" evidence="1">
    <location>
        <position position="171"/>
    </location>
    <ligand>
        <name>L-glutamate</name>
        <dbReference type="ChEBI" id="CHEBI:29985"/>
    </ligand>
</feature>
<feature type="binding site" evidence="1">
    <location>
        <position position="189"/>
    </location>
    <ligand>
        <name>L-glutamate</name>
        <dbReference type="ChEBI" id="CHEBI:29985"/>
    </ligand>
</feature>
<feature type="binding site" evidence="1">
    <location>
        <position position="230"/>
    </location>
    <ligand>
        <name>ATP</name>
        <dbReference type="ChEBI" id="CHEBI:30616"/>
    </ligand>
</feature>
<gene>
    <name evidence="1" type="primary">gluQ</name>
    <name type="ordered locus">Pmen_3586</name>
</gene>
<proteinExistence type="inferred from homology"/>
<organism>
    <name type="scientific">Ectopseudomonas mendocina (strain ymp)</name>
    <name type="common">Pseudomonas mendocina</name>
    <dbReference type="NCBI Taxonomy" id="399739"/>
    <lineage>
        <taxon>Bacteria</taxon>
        <taxon>Pseudomonadati</taxon>
        <taxon>Pseudomonadota</taxon>
        <taxon>Gammaproteobacteria</taxon>
        <taxon>Pseudomonadales</taxon>
        <taxon>Pseudomonadaceae</taxon>
        <taxon>Ectopseudomonas</taxon>
    </lineage>
</organism>
<protein>
    <recommendedName>
        <fullName evidence="1">Glutamyl-Q tRNA(Asp) synthetase</fullName>
        <shortName evidence="1">Glu-Q-RSs</shortName>
        <ecNumber evidence="1">6.1.1.-</ecNumber>
    </recommendedName>
</protein>
<dbReference type="EC" id="6.1.1.-" evidence="1"/>
<dbReference type="EMBL" id="CP000680">
    <property type="protein sequence ID" value="ABP86334.1"/>
    <property type="molecule type" value="Genomic_DNA"/>
</dbReference>
<dbReference type="SMR" id="A4XYB8"/>
<dbReference type="STRING" id="399739.Pmen_3586"/>
<dbReference type="KEGG" id="pmy:Pmen_3586"/>
<dbReference type="PATRIC" id="fig|399739.8.peg.3634"/>
<dbReference type="eggNOG" id="COG0008">
    <property type="taxonomic scope" value="Bacteria"/>
</dbReference>
<dbReference type="HOGENOM" id="CLU_015768_0_1_6"/>
<dbReference type="OrthoDB" id="9807503at2"/>
<dbReference type="GO" id="GO:0005829">
    <property type="term" value="C:cytosol"/>
    <property type="evidence" value="ECO:0007669"/>
    <property type="project" value="TreeGrafter"/>
</dbReference>
<dbReference type="GO" id="GO:0005524">
    <property type="term" value="F:ATP binding"/>
    <property type="evidence" value="ECO:0007669"/>
    <property type="project" value="UniProtKB-KW"/>
</dbReference>
<dbReference type="GO" id="GO:0004818">
    <property type="term" value="F:glutamate-tRNA ligase activity"/>
    <property type="evidence" value="ECO:0007669"/>
    <property type="project" value="TreeGrafter"/>
</dbReference>
<dbReference type="GO" id="GO:0008270">
    <property type="term" value="F:zinc ion binding"/>
    <property type="evidence" value="ECO:0007669"/>
    <property type="project" value="UniProtKB-UniRule"/>
</dbReference>
<dbReference type="GO" id="GO:0006424">
    <property type="term" value="P:glutamyl-tRNA aminoacylation"/>
    <property type="evidence" value="ECO:0007669"/>
    <property type="project" value="InterPro"/>
</dbReference>
<dbReference type="GO" id="GO:0006400">
    <property type="term" value="P:tRNA modification"/>
    <property type="evidence" value="ECO:0007669"/>
    <property type="project" value="InterPro"/>
</dbReference>
<dbReference type="FunFam" id="3.40.50.620:FF:000093">
    <property type="entry name" value="Glutamyl-Q tRNA(Asp) synthetase"/>
    <property type="match status" value="1"/>
</dbReference>
<dbReference type="Gene3D" id="3.90.800.10">
    <property type="entry name" value="Glutamyl-tRNA Synthetase, Domain 3"/>
    <property type="match status" value="1"/>
</dbReference>
<dbReference type="Gene3D" id="3.40.50.620">
    <property type="entry name" value="HUPs"/>
    <property type="match status" value="1"/>
</dbReference>
<dbReference type="HAMAP" id="MF_01428">
    <property type="entry name" value="Glu_Q_tRNA_synth"/>
    <property type="match status" value="1"/>
</dbReference>
<dbReference type="InterPro" id="IPR022380">
    <property type="entry name" value="Glu-Q_tRNA(Asp)_Synthase"/>
</dbReference>
<dbReference type="InterPro" id="IPR000924">
    <property type="entry name" value="Glu/Gln-tRNA-synth"/>
</dbReference>
<dbReference type="InterPro" id="IPR020058">
    <property type="entry name" value="Glu/Gln-tRNA-synth_Ib_cat-dom"/>
</dbReference>
<dbReference type="InterPro" id="IPR049940">
    <property type="entry name" value="GluQ/Sye"/>
</dbReference>
<dbReference type="InterPro" id="IPR014729">
    <property type="entry name" value="Rossmann-like_a/b/a_fold"/>
</dbReference>
<dbReference type="NCBIfam" id="NF004314">
    <property type="entry name" value="PRK05710.1-3"/>
    <property type="match status" value="1"/>
</dbReference>
<dbReference type="NCBIfam" id="TIGR03838">
    <property type="entry name" value="queuosine_YadB"/>
    <property type="match status" value="1"/>
</dbReference>
<dbReference type="PANTHER" id="PTHR43311">
    <property type="entry name" value="GLUTAMATE--TRNA LIGASE"/>
    <property type="match status" value="1"/>
</dbReference>
<dbReference type="PANTHER" id="PTHR43311:SF1">
    <property type="entry name" value="GLUTAMYL-Q TRNA(ASP) SYNTHETASE"/>
    <property type="match status" value="1"/>
</dbReference>
<dbReference type="Pfam" id="PF00749">
    <property type="entry name" value="tRNA-synt_1c"/>
    <property type="match status" value="2"/>
</dbReference>
<dbReference type="PRINTS" id="PR00987">
    <property type="entry name" value="TRNASYNTHGLU"/>
</dbReference>
<dbReference type="SUPFAM" id="SSF52374">
    <property type="entry name" value="Nucleotidylyl transferase"/>
    <property type="match status" value="1"/>
</dbReference>